<name>TNR26_MOUSE</name>
<feature type="signal peptide" evidence="1">
    <location>
        <begin position="1"/>
        <end position="19"/>
    </location>
</feature>
<feature type="chain" id="PRO_0000034607" description="Tumor necrosis factor receptor superfamily member 26">
    <location>
        <begin position="20"/>
        <end position="204"/>
    </location>
</feature>
<feature type="topological domain" description="Extracellular" evidence="1">
    <location>
        <begin position="20"/>
        <end position="164"/>
    </location>
</feature>
<feature type="transmembrane region" description="Helical" evidence="1">
    <location>
        <begin position="165"/>
        <end position="185"/>
    </location>
</feature>
<feature type="topological domain" description="Cytoplasmic" evidence="1">
    <location>
        <begin position="186"/>
        <end position="204"/>
    </location>
</feature>
<feature type="repeat" description="TNFR-Cys 1">
    <location>
        <begin position="27"/>
        <end position="61"/>
    </location>
</feature>
<feature type="repeat" description="TNFR-Cys 2">
    <location>
        <begin position="63"/>
        <end position="103"/>
    </location>
</feature>
<feature type="repeat" description="TNFR-Cys 3">
    <location>
        <begin position="104"/>
        <end position="143"/>
    </location>
</feature>
<feature type="glycosylation site" description="N-linked (GlcNAc...) asparagine" evidence="1">
    <location>
        <position position="57"/>
    </location>
</feature>
<feature type="glycosylation site" description="N-linked (GlcNAc...) asparagine" evidence="1">
    <location>
        <position position="136"/>
    </location>
</feature>
<feature type="disulfide bond" evidence="2">
    <location>
        <begin position="27"/>
        <end position="38"/>
    </location>
</feature>
<feature type="disulfide bond" evidence="2">
    <location>
        <begin position="39"/>
        <end position="52"/>
    </location>
</feature>
<feature type="disulfide bond" evidence="2">
    <location>
        <begin position="42"/>
        <end position="61"/>
    </location>
</feature>
<feature type="disulfide bond" evidence="2">
    <location>
        <begin position="64"/>
        <end position="79"/>
    </location>
</feature>
<feature type="disulfide bond" evidence="2">
    <location>
        <begin position="82"/>
        <end position="95"/>
    </location>
</feature>
<feature type="disulfide bond" evidence="2">
    <location>
        <begin position="85"/>
        <end position="103"/>
    </location>
</feature>
<feature type="disulfide bond" evidence="2">
    <location>
        <begin position="105"/>
        <end position="120"/>
    </location>
</feature>
<feature type="disulfide bond" evidence="2">
    <location>
        <begin position="123"/>
        <end position="135"/>
    </location>
</feature>
<feature type="disulfide bond" evidence="2">
    <location>
        <begin position="126"/>
        <end position="143"/>
    </location>
</feature>
<dbReference type="EMBL" id="AY165628">
    <property type="protein sequence ID" value="AAN87808.1"/>
    <property type="molecule type" value="mRNA"/>
</dbReference>
<dbReference type="CCDS" id="CCDS40199.1"/>
<dbReference type="RefSeq" id="NP_783580.1">
    <property type="nucleotide sequence ID" value="NM_175649.5"/>
</dbReference>
<dbReference type="SMR" id="P83626"/>
<dbReference type="BioGRID" id="232630">
    <property type="interactions" value="1"/>
</dbReference>
<dbReference type="FunCoup" id="P83626">
    <property type="interactions" value="2"/>
</dbReference>
<dbReference type="STRING" id="10090.ENSMUSP00000054938"/>
<dbReference type="GlyCosmos" id="P83626">
    <property type="glycosylation" value="2 sites, No reported glycans"/>
</dbReference>
<dbReference type="GlyGen" id="P83626">
    <property type="glycosylation" value="2 sites"/>
</dbReference>
<dbReference type="PaxDb" id="10090-ENSMUSP00000054938"/>
<dbReference type="ProteomicsDB" id="260643"/>
<dbReference type="DNASU" id="244237"/>
<dbReference type="Ensembl" id="ENSMUST00000055723.9">
    <property type="protein sequence ID" value="ENSMUSP00000054938.8"/>
    <property type="gene ID" value="ENSMUSG00000045362.9"/>
</dbReference>
<dbReference type="GeneID" id="244237"/>
<dbReference type="KEGG" id="mmu:244237"/>
<dbReference type="UCSC" id="uc009kpp.1">
    <property type="organism name" value="mouse"/>
</dbReference>
<dbReference type="AGR" id="MGI:2651928"/>
<dbReference type="CTD" id="244237"/>
<dbReference type="MGI" id="MGI:2651928">
    <property type="gene designation" value="Tnfrsf26"/>
</dbReference>
<dbReference type="VEuPathDB" id="HostDB:ENSMUSG00000045362"/>
<dbReference type="eggNOG" id="ENOG502TD2A">
    <property type="taxonomic scope" value="Eukaryota"/>
</dbReference>
<dbReference type="GeneTree" id="ENSGT00930000151070"/>
<dbReference type="HOGENOM" id="CLU_107190_0_0_1"/>
<dbReference type="InParanoid" id="P83626"/>
<dbReference type="OMA" id="GAREYSH"/>
<dbReference type="OrthoDB" id="8848202at2759"/>
<dbReference type="PhylomeDB" id="P83626"/>
<dbReference type="TreeFam" id="TF333916"/>
<dbReference type="BioGRID-ORCS" id="244237">
    <property type="hits" value="1 hit in 77 CRISPR screens"/>
</dbReference>
<dbReference type="PRO" id="PR:P83626"/>
<dbReference type="Proteomes" id="UP000000589">
    <property type="component" value="Chromosome 7"/>
</dbReference>
<dbReference type="RNAct" id="P83626">
    <property type="molecule type" value="protein"/>
</dbReference>
<dbReference type="Bgee" id="ENSMUSG00000045362">
    <property type="expression patterns" value="Expressed in granulocyte and 32 other cell types or tissues"/>
</dbReference>
<dbReference type="ExpressionAtlas" id="P83626">
    <property type="expression patterns" value="baseline and differential"/>
</dbReference>
<dbReference type="GO" id="GO:0016020">
    <property type="term" value="C:membrane"/>
    <property type="evidence" value="ECO:0007669"/>
    <property type="project" value="UniProtKB-SubCell"/>
</dbReference>
<dbReference type="CDD" id="cd15837">
    <property type="entry name" value="TNFRSF26"/>
    <property type="match status" value="1"/>
</dbReference>
<dbReference type="Gene3D" id="2.10.50.10">
    <property type="entry name" value="Tumor Necrosis Factor Receptor, subunit A, domain 2"/>
    <property type="match status" value="2"/>
</dbReference>
<dbReference type="InterPro" id="IPR001368">
    <property type="entry name" value="TNFR/NGFR_Cys_rich_reg"/>
</dbReference>
<dbReference type="InterPro" id="IPR052491">
    <property type="entry name" value="TNFRSF10"/>
</dbReference>
<dbReference type="InterPro" id="IPR034062">
    <property type="entry name" value="TNFRSF26_N"/>
</dbReference>
<dbReference type="PANTHER" id="PTHR46330">
    <property type="entry name" value="TUMOR NECROSIS FACTOR RECEPTOR SUPERFAMILY MEMBER 10B"/>
    <property type="match status" value="1"/>
</dbReference>
<dbReference type="PANTHER" id="PTHR46330:SF16">
    <property type="entry name" value="TUMOR NECROSIS FACTOR RECEPTOR SUPERFAMILY MEMBER 22"/>
    <property type="match status" value="1"/>
</dbReference>
<dbReference type="Pfam" id="PF00020">
    <property type="entry name" value="TNFR_c6"/>
    <property type="match status" value="2"/>
</dbReference>
<dbReference type="SMART" id="SM00208">
    <property type="entry name" value="TNFR"/>
    <property type="match status" value="3"/>
</dbReference>
<dbReference type="SUPFAM" id="SSF57586">
    <property type="entry name" value="TNF receptor-like"/>
    <property type="match status" value="2"/>
</dbReference>
<dbReference type="PROSITE" id="PS00652">
    <property type="entry name" value="TNFR_NGFR_1"/>
    <property type="match status" value="3"/>
</dbReference>
<dbReference type="PROSITE" id="PS50050">
    <property type="entry name" value="TNFR_NGFR_2"/>
    <property type="match status" value="2"/>
</dbReference>
<evidence type="ECO:0000255" key="1"/>
<evidence type="ECO:0000255" key="2">
    <source>
        <dbReference type="PROSITE-ProRule" id="PRU00206"/>
    </source>
</evidence>
<evidence type="ECO:0000269" key="3">
    <source>
    </source>
</evidence>
<evidence type="ECO:0000305" key="4"/>
<organism>
    <name type="scientific">Mus musculus</name>
    <name type="common">Mouse</name>
    <dbReference type="NCBI Taxonomy" id="10090"/>
    <lineage>
        <taxon>Eukaryota</taxon>
        <taxon>Metazoa</taxon>
        <taxon>Chordata</taxon>
        <taxon>Craniata</taxon>
        <taxon>Vertebrata</taxon>
        <taxon>Euteleostomi</taxon>
        <taxon>Mammalia</taxon>
        <taxon>Eutheria</taxon>
        <taxon>Euarchontoglires</taxon>
        <taxon>Glires</taxon>
        <taxon>Rodentia</taxon>
        <taxon>Myomorpha</taxon>
        <taxon>Muroidea</taxon>
        <taxon>Muridae</taxon>
        <taxon>Murinae</taxon>
        <taxon>Mus</taxon>
        <taxon>Mus</taxon>
    </lineage>
</organism>
<sequence length="204" mass="22708">MTRLRLLLLLGLLLRVAVCSVNTITLCKIGEFKHENLCCLQCSAGTYLRNPCQENHNKSECAPCDSEHFIDHKNRESECFPCSVCRDDQEEVAKCSRTADRVCQCKQGTYCDSENCLERCHTCSSCPDGRVVRKCNATMDTVCDKFDSEPGQSGSQCFCFSKPLGIVVIIAAFIIIIGAVIILILKIICYCKRGENIQLSSTML</sequence>
<accession>P83626</accession>
<reference key="1">
    <citation type="journal article" date="2003" name="J. Biol. Chem.">
        <title>Identification of a new murine tumor necrosis factor receptor locus that contains two novel murine receptors for tumor necrosis factor-related apoptosis-inducing ligand (TRAIL).</title>
        <authorList>
            <person name="Schneider P."/>
            <person name="Olson D."/>
            <person name="Tardivel A."/>
            <person name="Browning B."/>
            <person name="Lugovskoy A."/>
            <person name="Gong D."/>
            <person name="Dobles M."/>
            <person name="Hertig S."/>
            <person name="Hofmann K."/>
            <person name="Van Vlijmen H."/>
            <person name="Hsu Y.-M."/>
            <person name="Burkly L.C."/>
            <person name="Tschopp J."/>
            <person name="Zheng T.S."/>
        </authorList>
    </citation>
    <scope>NUCLEOTIDE SEQUENCE [MRNA]</scope>
    <scope>TISSUE SPECIFICITY</scope>
    <scope>3D-STRUCTURE MODELING OF 41-148</scope>
    <source>
        <strain>C57BL/6J</strain>
        <tissue>Spleen</tissue>
    </source>
</reference>
<comment type="subcellular location">
    <subcellularLocation>
        <location evidence="4">Membrane</location>
        <topology evidence="4">Single-pass type I membrane protein</topology>
    </subcellularLocation>
</comment>
<comment type="tissue specificity">
    <text evidence="3">Expressed in thymus and spleen. Detectable levels in lung.</text>
</comment>
<gene>
    <name type="primary">Tnfrsf26</name>
    <name type="synonym">Tnfrh3</name>
</gene>
<protein>
    <recommendedName>
        <fullName>Tumor necrosis factor receptor superfamily member 26</fullName>
    </recommendedName>
    <alternativeName>
        <fullName>TNF receptor homolog 3</fullName>
    </alternativeName>
</protein>
<proteinExistence type="evidence at transcript level"/>
<keyword id="KW-1015">Disulfide bond</keyword>
<keyword id="KW-0325">Glycoprotein</keyword>
<keyword id="KW-0472">Membrane</keyword>
<keyword id="KW-0675">Receptor</keyword>
<keyword id="KW-1185">Reference proteome</keyword>
<keyword id="KW-0677">Repeat</keyword>
<keyword id="KW-0732">Signal</keyword>
<keyword id="KW-0812">Transmembrane</keyword>
<keyword id="KW-1133">Transmembrane helix</keyword>